<feature type="chain" id="PRO_0000168224" description="Dihydropteroate synthase">
    <location>
        <begin position="1"/>
        <end position="267"/>
    </location>
</feature>
<feature type="domain" description="Pterin-binding" evidence="4">
    <location>
        <begin position="1"/>
        <end position="251"/>
    </location>
</feature>
<feature type="binding site" evidence="3">
    <location>
        <position position="11"/>
    </location>
    <ligand>
        <name>Mg(2+)</name>
        <dbReference type="ChEBI" id="CHEBI:18420"/>
    </ligand>
</feature>
<feature type="binding site" evidence="2">
    <location>
        <position position="51"/>
    </location>
    <ligand>
        <name>(7,8-dihydropterin-6-yl)methyl diphosphate</name>
        <dbReference type="ChEBI" id="CHEBI:72950"/>
    </ligand>
</feature>
<feature type="binding site" evidence="2">
    <location>
        <position position="84"/>
    </location>
    <ligand>
        <name>(7,8-dihydropterin-6-yl)methyl diphosphate</name>
        <dbReference type="ChEBI" id="CHEBI:72950"/>
    </ligand>
</feature>
<feature type="binding site" evidence="2">
    <location>
        <position position="103"/>
    </location>
    <ligand>
        <name>(7,8-dihydropterin-6-yl)methyl diphosphate</name>
        <dbReference type="ChEBI" id="CHEBI:72950"/>
    </ligand>
</feature>
<feature type="binding site" evidence="2">
    <location>
        <position position="167"/>
    </location>
    <ligand>
        <name>(7,8-dihydropterin-6-yl)methyl diphosphate</name>
        <dbReference type="ChEBI" id="CHEBI:72950"/>
    </ligand>
</feature>
<feature type="binding site" evidence="2">
    <location>
        <position position="203"/>
    </location>
    <ligand>
        <name>(7,8-dihydropterin-6-yl)methyl diphosphate</name>
        <dbReference type="ChEBI" id="CHEBI:72950"/>
    </ligand>
</feature>
<feature type="binding site" evidence="2">
    <location>
        <begin position="239"/>
        <end position="241"/>
    </location>
    <ligand>
        <name>(7,8-dihydropterin-6-yl)methyl diphosphate</name>
        <dbReference type="ChEBI" id="CHEBI:72950"/>
    </ligand>
</feature>
<organism>
    <name type="scientific">Staphylococcus aureus (strain MSSA476)</name>
    <dbReference type="NCBI Taxonomy" id="282459"/>
    <lineage>
        <taxon>Bacteria</taxon>
        <taxon>Bacillati</taxon>
        <taxon>Bacillota</taxon>
        <taxon>Bacilli</taxon>
        <taxon>Bacillales</taxon>
        <taxon>Staphylococcaceae</taxon>
        <taxon>Staphylococcus</taxon>
    </lineage>
</organism>
<dbReference type="EC" id="2.5.1.15"/>
<dbReference type="EMBL" id="BX571857">
    <property type="protein sequence ID" value="CAG42246.1"/>
    <property type="molecule type" value="Genomic_DNA"/>
</dbReference>
<dbReference type="RefSeq" id="WP_000167926.1">
    <property type="nucleotide sequence ID" value="NC_002953.3"/>
</dbReference>
<dbReference type="SMR" id="Q6GBX4"/>
<dbReference type="KEGG" id="sas:SAS0471"/>
<dbReference type="HOGENOM" id="CLU_008023_0_2_9"/>
<dbReference type="UniPathway" id="UPA00077">
    <property type="reaction ID" value="UER00156"/>
</dbReference>
<dbReference type="GO" id="GO:0005829">
    <property type="term" value="C:cytosol"/>
    <property type="evidence" value="ECO:0007669"/>
    <property type="project" value="TreeGrafter"/>
</dbReference>
<dbReference type="GO" id="GO:0004156">
    <property type="term" value="F:dihydropteroate synthase activity"/>
    <property type="evidence" value="ECO:0007669"/>
    <property type="project" value="UniProtKB-EC"/>
</dbReference>
<dbReference type="GO" id="GO:0046872">
    <property type="term" value="F:metal ion binding"/>
    <property type="evidence" value="ECO:0007669"/>
    <property type="project" value="UniProtKB-KW"/>
</dbReference>
<dbReference type="GO" id="GO:0046656">
    <property type="term" value="P:folic acid biosynthetic process"/>
    <property type="evidence" value="ECO:0007669"/>
    <property type="project" value="UniProtKB-KW"/>
</dbReference>
<dbReference type="GO" id="GO:0046654">
    <property type="term" value="P:tetrahydrofolate biosynthetic process"/>
    <property type="evidence" value="ECO:0007669"/>
    <property type="project" value="UniProtKB-UniPathway"/>
</dbReference>
<dbReference type="CDD" id="cd00739">
    <property type="entry name" value="DHPS"/>
    <property type="match status" value="1"/>
</dbReference>
<dbReference type="FunFam" id="3.20.20.20:FF:000010">
    <property type="entry name" value="Dihydropteroate synthase"/>
    <property type="match status" value="1"/>
</dbReference>
<dbReference type="Gene3D" id="3.20.20.20">
    <property type="entry name" value="Dihydropteroate synthase-like"/>
    <property type="match status" value="1"/>
</dbReference>
<dbReference type="InterPro" id="IPR045031">
    <property type="entry name" value="DHP_synth-like"/>
</dbReference>
<dbReference type="InterPro" id="IPR006390">
    <property type="entry name" value="DHP_synth_dom"/>
</dbReference>
<dbReference type="InterPro" id="IPR011005">
    <property type="entry name" value="Dihydropteroate_synth-like_sf"/>
</dbReference>
<dbReference type="InterPro" id="IPR000489">
    <property type="entry name" value="Pterin-binding_dom"/>
</dbReference>
<dbReference type="NCBIfam" id="TIGR01496">
    <property type="entry name" value="DHPS"/>
    <property type="match status" value="1"/>
</dbReference>
<dbReference type="PANTHER" id="PTHR20941">
    <property type="entry name" value="FOLATE SYNTHESIS PROTEINS"/>
    <property type="match status" value="1"/>
</dbReference>
<dbReference type="PANTHER" id="PTHR20941:SF1">
    <property type="entry name" value="FOLIC ACID SYNTHESIS PROTEIN FOL1"/>
    <property type="match status" value="1"/>
</dbReference>
<dbReference type="Pfam" id="PF00809">
    <property type="entry name" value="Pterin_bind"/>
    <property type="match status" value="1"/>
</dbReference>
<dbReference type="SUPFAM" id="SSF51717">
    <property type="entry name" value="Dihydropteroate synthetase-like"/>
    <property type="match status" value="1"/>
</dbReference>
<dbReference type="PROSITE" id="PS00792">
    <property type="entry name" value="DHPS_1"/>
    <property type="match status" value="1"/>
</dbReference>
<dbReference type="PROSITE" id="PS00793">
    <property type="entry name" value="DHPS_2"/>
    <property type="match status" value="1"/>
</dbReference>
<dbReference type="PROSITE" id="PS50972">
    <property type="entry name" value="PTERIN_BINDING"/>
    <property type="match status" value="1"/>
</dbReference>
<keyword id="KW-0289">Folate biosynthesis</keyword>
<keyword id="KW-0460">Magnesium</keyword>
<keyword id="KW-0479">Metal-binding</keyword>
<keyword id="KW-0808">Transferase</keyword>
<sequence length="267" mass="29551">MTKTKIMGILNVTPDSFSDGGKFNNVESAINRVKAMIDEGVDIIDVGGVSTRPGHEMVSLEEEMNRVLPVVEAIVGFDVKISVDTFRSEVAEACLKLGVDMINDQWAGLYDHRMFQIVAKYDAEIILMHNGNGNRDEPVVEEMLTSLLAQAHQAKIAGIPSNKIWLDPGIGFAKTRNEEAEVMARLDELVATEYPVLLATSRKRFTKEMMGYDTTPVERDEVTAATTAYGIMKGVRAVRVHNVELNAKLAKGIDFLKENENARHNLS</sequence>
<name>DHPS_STAAS</name>
<proteinExistence type="inferred from homology"/>
<reference key="1">
    <citation type="journal article" date="2004" name="Proc. Natl. Acad. Sci. U.S.A.">
        <title>Complete genomes of two clinical Staphylococcus aureus strains: evidence for the rapid evolution of virulence and drug resistance.</title>
        <authorList>
            <person name="Holden M.T.G."/>
            <person name="Feil E.J."/>
            <person name="Lindsay J.A."/>
            <person name="Peacock S.J."/>
            <person name="Day N.P.J."/>
            <person name="Enright M.C."/>
            <person name="Foster T.J."/>
            <person name="Moore C.E."/>
            <person name="Hurst L."/>
            <person name="Atkin R."/>
            <person name="Barron A."/>
            <person name="Bason N."/>
            <person name="Bentley S.D."/>
            <person name="Chillingworth C."/>
            <person name="Chillingworth T."/>
            <person name="Churcher C."/>
            <person name="Clark L."/>
            <person name="Corton C."/>
            <person name="Cronin A."/>
            <person name="Doggett J."/>
            <person name="Dowd L."/>
            <person name="Feltwell T."/>
            <person name="Hance Z."/>
            <person name="Harris B."/>
            <person name="Hauser H."/>
            <person name="Holroyd S."/>
            <person name="Jagels K."/>
            <person name="James K.D."/>
            <person name="Lennard N."/>
            <person name="Line A."/>
            <person name="Mayes R."/>
            <person name="Moule S."/>
            <person name="Mungall K."/>
            <person name="Ormond D."/>
            <person name="Quail M.A."/>
            <person name="Rabbinowitsch E."/>
            <person name="Rutherford K.M."/>
            <person name="Sanders M."/>
            <person name="Sharp S."/>
            <person name="Simmonds M."/>
            <person name="Stevens K."/>
            <person name="Whitehead S."/>
            <person name="Barrell B.G."/>
            <person name="Spratt B.G."/>
            <person name="Parkhill J."/>
        </authorList>
    </citation>
    <scope>NUCLEOTIDE SEQUENCE [LARGE SCALE GENOMIC DNA]</scope>
    <source>
        <strain>MSSA476</strain>
    </source>
</reference>
<comment type="function">
    <text evidence="2">Catalyzes the condensation of para-aminobenzoate (pABA) with 6-hydroxymethyl-7,8-dihydropterin diphosphate (DHPt-PP) to form 7,8-dihydropteroate (H2Pte), the immediate precursor of folate derivatives.</text>
</comment>
<comment type="catalytic activity">
    <reaction evidence="2">
        <text>(7,8-dihydropterin-6-yl)methyl diphosphate + 4-aminobenzoate = 7,8-dihydropteroate + diphosphate</text>
        <dbReference type="Rhea" id="RHEA:19949"/>
        <dbReference type="ChEBI" id="CHEBI:17836"/>
        <dbReference type="ChEBI" id="CHEBI:17839"/>
        <dbReference type="ChEBI" id="CHEBI:33019"/>
        <dbReference type="ChEBI" id="CHEBI:72950"/>
        <dbReference type="EC" id="2.5.1.15"/>
    </reaction>
</comment>
<comment type="cofactor">
    <cofactor evidence="2">
        <name>Mg(2+)</name>
        <dbReference type="ChEBI" id="CHEBI:18420"/>
    </cofactor>
</comment>
<comment type="pathway">
    <text>Cofactor biosynthesis; tetrahydrofolate biosynthesis; 7,8-dihydrofolate from 2-amino-4-hydroxy-6-hydroxymethyl-7,8-dihydropteridine diphosphate and 4-aminobenzoate: step 1/2.</text>
</comment>
<comment type="subunit">
    <text evidence="1">Homodimer.</text>
</comment>
<comment type="similarity">
    <text evidence="5">Belongs to the DHPS family.</text>
</comment>
<protein>
    <recommendedName>
        <fullName>Dihydropteroate synthase</fullName>
        <shortName>DHPS</shortName>
        <ecNumber>2.5.1.15</ecNumber>
    </recommendedName>
    <alternativeName>
        <fullName>Dihydropteroate pyrophosphorylase</fullName>
    </alternativeName>
</protein>
<evidence type="ECO:0000250" key="1"/>
<evidence type="ECO:0000250" key="2">
    <source>
        <dbReference type="UniProtKB" id="P0AC13"/>
    </source>
</evidence>
<evidence type="ECO:0000250" key="3">
    <source>
        <dbReference type="UniProtKB" id="P9WND1"/>
    </source>
</evidence>
<evidence type="ECO:0000255" key="4">
    <source>
        <dbReference type="PROSITE-ProRule" id="PRU00334"/>
    </source>
</evidence>
<evidence type="ECO:0000305" key="5"/>
<accession>Q6GBX4</accession>
<gene>
    <name type="primary">folP</name>
    <name type="ordered locus">SAS0471</name>
</gene>